<reference key="1">
    <citation type="submission" date="2007-03" db="EMBL/GenBank/DDBJ databases">
        <title>Complete sequence of chromosome 1 of Burkholderia vietnamiensis G4.</title>
        <authorList>
            <consortium name="US DOE Joint Genome Institute"/>
            <person name="Copeland A."/>
            <person name="Lucas S."/>
            <person name="Lapidus A."/>
            <person name="Barry K."/>
            <person name="Detter J.C."/>
            <person name="Glavina del Rio T."/>
            <person name="Hammon N."/>
            <person name="Israni S."/>
            <person name="Dalin E."/>
            <person name="Tice H."/>
            <person name="Pitluck S."/>
            <person name="Chain P."/>
            <person name="Malfatti S."/>
            <person name="Shin M."/>
            <person name="Vergez L."/>
            <person name="Schmutz J."/>
            <person name="Larimer F."/>
            <person name="Land M."/>
            <person name="Hauser L."/>
            <person name="Kyrpides N."/>
            <person name="Tiedje J."/>
            <person name="Richardson P."/>
        </authorList>
    </citation>
    <scope>NUCLEOTIDE SEQUENCE [LARGE SCALE GENOMIC DNA]</scope>
    <source>
        <strain>G4 / LMG 22486</strain>
    </source>
</reference>
<protein>
    <recommendedName>
        <fullName evidence="1">dCTP deaminase</fullName>
        <ecNumber evidence="1">3.5.4.13</ecNumber>
    </recommendedName>
    <alternativeName>
        <fullName evidence="1">Deoxycytidine triphosphate deaminase</fullName>
    </alternativeName>
</protein>
<accession>A4JGW2</accession>
<organism>
    <name type="scientific">Burkholderia vietnamiensis (strain G4 / LMG 22486)</name>
    <name type="common">Burkholderia cepacia (strain R1808)</name>
    <dbReference type="NCBI Taxonomy" id="269482"/>
    <lineage>
        <taxon>Bacteria</taxon>
        <taxon>Pseudomonadati</taxon>
        <taxon>Pseudomonadota</taxon>
        <taxon>Betaproteobacteria</taxon>
        <taxon>Burkholderiales</taxon>
        <taxon>Burkholderiaceae</taxon>
        <taxon>Burkholderia</taxon>
        <taxon>Burkholderia cepacia complex</taxon>
    </lineage>
</organism>
<dbReference type="EC" id="3.5.4.13" evidence="1"/>
<dbReference type="EMBL" id="CP000614">
    <property type="protein sequence ID" value="ABO55515.1"/>
    <property type="molecule type" value="Genomic_DNA"/>
</dbReference>
<dbReference type="SMR" id="A4JGW2"/>
<dbReference type="KEGG" id="bvi:Bcep1808_2517"/>
<dbReference type="eggNOG" id="COG0717">
    <property type="taxonomic scope" value="Bacteria"/>
</dbReference>
<dbReference type="HOGENOM" id="CLU_087476_4_0_4"/>
<dbReference type="UniPathway" id="UPA00610">
    <property type="reaction ID" value="UER00665"/>
</dbReference>
<dbReference type="Proteomes" id="UP000002287">
    <property type="component" value="Chromosome 1"/>
</dbReference>
<dbReference type="GO" id="GO:0008829">
    <property type="term" value="F:dCTP deaminase activity"/>
    <property type="evidence" value="ECO:0007669"/>
    <property type="project" value="UniProtKB-UniRule"/>
</dbReference>
<dbReference type="GO" id="GO:0000166">
    <property type="term" value="F:nucleotide binding"/>
    <property type="evidence" value="ECO:0007669"/>
    <property type="project" value="UniProtKB-KW"/>
</dbReference>
<dbReference type="GO" id="GO:0006226">
    <property type="term" value="P:dUMP biosynthetic process"/>
    <property type="evidence" value="ECO:0007669"/>
    <property type="project" value="UniProtKB-UniPathway"/>
</dbReference>
<dbReference type="GO" id="GO:0006229">
    <property type="term" value="P:dUTP biosynthetic process"/>
    <property type="evidence" value="ECO:0007669"/>
    <property type="project" value="UniProtKB-UniRule"/>
</dbReference>
<dbReference type="GO" id="GO:0015949">
    <property type="term" value="P:nucleobase-containing small molecule interconversion"/>
    <property type="evidence" value="ECO:0007669"/>
    <property type="project" value="TreeGrafter"/>
</dbReference>
<dbReference type="CDD" id="cd07557">
    <property type="entry name" value="trimeric_dUTPase"/>
    <property type="match status" value="1"/>
</dbReference>
<dbReference type="FunFam" id="2.70.40.10:FF:000001">
    <property type="entry name" value="dCTP deaminase"/>
    <property type="match status" value="1"/>
</dbReference>
<dbReference type="Gene3D" id="2.70.40.10">
    <property type="match status" value="1"/>
</dbReference>
<dbReference type="HAMAP" id="MF_00146">
    <property type="entry name" value="dCTP_deaminase"/>
    <property type="match status" value="1"/>
</dbReference>
<dbReference type="InterPro" id="IPR011962">
    <property type="entry name" value="dCTP_deaminase"/>
</dbReference>
<dbReference type="InterPro" id="IPR036157">
    <property type="entry name" value="dUTPase-like_sf"/>
</dbReference>
<dbReference type="InterPro" id="IPR033704">
    <property type="entry name" value="dUTPase_trimeric"/>
</dbReference>
<dbReference type="NCBIfam" id="TIGR02274">
    <property type="entry name" value="dCTP_deam"/>
    <property type="match status" value="1"/>
</dbReference>
<dbReference type="PANTHER" id="PTHR42680">
    <property type="entry name" value="DCTP DEAMINASE"/>
    <property type="match status" value="1"/>
</dbReference>
<dbReference type="PANTHER" id="PTHR42680:SF3">
    <property type="entry name" value="DCTP DEAMINASE"/>
    <property type="match status" value="1"/>
</dbReference>
<dbReference type="Pfam" id="PF22769">
    <property type="entry name" value="DCD"/>
    <property type="match status" value="1"/>
</dbReference>
<dbReference type="SUPFAM" id="SSF51283">
    <property type="entry name" value="dUTPase-like"/>
    <property type="match status" value="1"/>
</dbReference>
<proteinExistence type="inferred from homology"/>
<feature type="chain" id="PRO_1000009696" description="dCTP deaminase">
    <location>
        <begin position="1"/>
        <end position="189"/>
    </location>
</feature>
<feature type="active site" description="Proton donor/acceptor" evidence="1">
    <location>
        <position position="138"/>
    </location>
</feature>
<feature type="binding site" evidence="1">
    <location>
        <begin position="112"/>
        <end position="117"/>
    </location>
    <ligand>
        <name>dCTP</name>
        <dbReference type="ChEBI" id="CHEBI:61481"/>
    </ligand>
</feature>
<feature type="binding site" evidence="1">
    <location>
        <begin position="136"/>
        <end position="138"/>
    </location>
    <ligand>
        <name>dCTP</name>
        <dbReference type="ChEBI" id="CHEBI:61481"/>
    </ligand>
</feature>
<feature type="binding site" evidence="1">
    <location>
        <position position="157"/>
    </location>
    <ligand>
        <name>dCTP</name>
        <dbReference type="ChEBI" id="CHEBI:61481"/>
    </ligand>
</feature>
<feature type="binding site" evidence="1">
    <location>
        <position position="171"/>
    </location>
    <ligand>
        <name>dCTP</name>
        <dbReference type="ChEBI" id="CHEBI:61481"/>
    </ligand>
</feature>
<feature type="binding site" evidence="1">
    <location>
        <position position="181"/>
    </location>
    <ligand>
        <name>dCTP</name>
        <dbReference type="ChEBI" id="CHEBI:61481"/>
    </ligand>
</feature>
<keyword id="KW-0378">Hydrolase</keyword>
<keyword id="KW-0546">Nucleotide metabolism</keyword>
<keyword id="KW-0547">Nucleotide-binding</keyword>
<name>DCD_BURVG</name>
<evidence type="ECO:0000255" key="1">
    <source>
        <dbReference type="HAMAP-Rule" id="MF_00146"/>
    </source>
</evidence>
<gene>
    <name evidence="1" type="primary">dcd</name>
    <name type="ordered locus">Bcep1808_2517</name>
</gene>
<sequence>MSIKSDKWIRRMAEEHKMIEPFVPDQVRASEDGRRIVSYGTSSYGYDIRCADEFKIFTNINSTIVDPKNFDEGSFVDFKGDVCIIPPNSFALARTVEYFRIPRTVLTVCLGKSTYARCGIIVNVTPFEPEWEGYVTLEFSNTTPLPAKIYANEGVAQVLFFESDEVCDVSYADRGGKYQGQRGVTLPKT</sequence>
<comment type="function">
    <text evidence="1">Catalyzes the deamination of dCTP to dUTP.</text>
</comment>
<comment type="catalytic activity">
    <reaction evidence="1">
        <text>dCTP + H2O + H(+) = dUTP + NH4(+)</text>
        <dbReference type="Rhea" id="RHEA:22680"/>
        <dbReference type="ChEBI" id="CHEBI:15377"/>
        <dbReference type="ChEBI" id="CHEBI:15378"/>
        <dbReference type="ChEBI" id="CHEBI:28938"/>
        <dbReference type="ChEBI" id="CHEBI:61481"/>
        <dbReference type="ChEBI" id="CHEBI:61555"/>
        <dbReference type="EC" id="3.5.4.13"/>
    </reaction>
</comment>
<comment type="pathway">
    <text evidence="1">Pyrimidine metabolism; dUMP biosynthesis; dUMP from dCTP (dUTP route): step 1/2.</text>
</comment>
<comment type="subunit">
    <text evidence="1">Homotrimer.</text>
</comment>
<comment type="similarity">
    <text evidence="1">Belongs to the dCTP deaminase family.</text>
</comment>